<name>Y2659_BACC2</name>
<feature type="chain" id="PRO_1000200760" description="UPF0397 protein BCG9842_B2659">
    <location>
        <begin position="1"/>
        <end position="182"/>
    </location>
</feature>
<feature type="transmembrane region" description="Helical" evidence="1">
    <location>
        <begin position="9"/>
        <end position="29"/>
    </location>
</feature>
<feature type="transmembrane region" description="Helical" evidence="1">
    <location>
        <begin position="40"/>
        <end position="60"/>
    </location>
</feature>
<feature type="transmembrane region" description="Helical" evidence="1">
    <location>
        <begin position="71"/>
        <end position="91"/>
    </location>
</feature>
<feature type="transmembrane region" description="Helical" evidence="1">
    <location>
        <begin position="114"/>
        <end position="134"/>
    </location>
</feature>
<feature type="transmembrane region" description="Helical" evidence="1">
    <location>
        <begin position="142"/>
        <end position="162"/>
    </location>
</feature>
<keyword id="KW-1003">Cell membrane</keyword>
<keyword id="KW-0472">Membrane</keyword>
<keyword id="KW-0812">Transmembrane</keyword>
<keyword id="KW-1133">Transmembrane helix</keyword>
<comment type="subcellular location">
    <subcellularLocation>
        <location evidence="1">Cell membrane</location>
        <topology evidence="1">Multi-pass membrane protein</topology>
    </subcellularLocation>
</comment>
<comment type="similarity">
    <text evidence="1">Belongs to the UPF0397 family.</text>
</comment>
<sequence length="182" mass="19072">MNKLSTKLVVAIGIGAALYGILGLWGFSIAPNTFIKPALAILTVFGALFGPVAGLLIGLIGHTVTDTIAGWGIWWGWVISSGIIGFSMGLIQKRVGFSVKNGSFNKGDISYLAITGLVGIVIAIIFAGAFDIIVMGEPFDKIVIQVLGATISDVIVFLVLGLPLTIGLAKSNKKHAHLKIEK</sequence>
<accession>B7IIF0</accession>
<evidence type="ECO:0000255" key="1">
    <source>
        <dbReference type="HAMAP-Rule" id="MF_01572"/>
    </source>
</evidence>
<organism>
    <name type="scientific">Bacillus cereus (strain G9842)</name>
    <dbReference type="NCBI Taxonomy" id="405531"/>
    <lineage>
        <taxon>Bacteria</taxon>
        <taxon>Bacillati</taxon>
        <taxon>Bacillota</taxon>
        <taxon>Bacilli</taxon>
        <taxon>Bacillales</taxon>
        <taxon>Bacillaceae</taxon>
        <taxon>Bacillus</taxon>
        <taxon>Bacillus cereus group</taxon>
    </lineage>
</organism>
<gene>
    <name type="ordered locus">BCG9842_B2659</name>
</gene>
<protein>
    <recommendedName>
        <fullName evidence="1">UPF0397 protein BCG9842_B2659</fullName>
    </recommendedName>
</protein>
<reference key="1">
    <citation type="submission" date="2008-10" db="EMBL/GenBank/DDBJ databases">
        <title>Genome sequence of Bacillus cereus G9842.</title>
        <authorList>
            <person name="Dodson R.J."/>
            <person name="Durkin A.S."/>
            <person name="Rosovitz M.J."/>
            <person name="Rasko D.A."/>
            <person name="Hoffmaster A."/>
            <person name="Ravel J."/>
            <person name="Sutton G."/>
        </authorList>
    </citation>
    <scope>NUCLEOTIDE SEQUENCE [LARGE SCALE GENOMIC DNA]</scope>
    <source>
        <strain>G9842</strain>
    </source>
</reference>
<proteinExistence type="inferred from homology"/>
<dbReference type="EMBL" id="CP001186">
    <property type="protein sequence ID" value="ACK94832.1"/>
    <property type="molecule type" value="Genomic_DNA"/>
</dbReference>
<dbReference type="RefSeq" id="WP_001038209.1">
    <property type="nucleotide sequence ID" value="NC_011772.1"/>
</dbReference>
<dbReference type="SMR" id="B7IIF0"/>
<dbReference type="KEGG" id="bcg:BCG9842_B2659"/>
<dbReference type="HOGENOM" id="CLU_120023_0_0_9"/>
<dbReference type="Proteomes" id="UP000006744">
    <property type="component" value="Chromosome"/>
</dbReference>
<dbReference type="GO" id="GO:0005886">
    <property type="term" value="C:plasma membrane"/>
    <property type="evidence" value="ECO:0007669"/>
    <property type="project" value="UniProtKB-SubCell"/>
</dbReference>
<dbReference type="Gene3D" id="1.10.1760.20">
    <property type="match status" value="1"/>
</dbReference>
<dbReference type="HAMAP" id="MF_01572">
    <property type="entry name" value="UPF0397"/>
    <property type="match status" value="1"/>
</dbReference>
<dbReference type="InterPro" id="IPR009825">
    <property type="entry name" value="ECF_substrate-spec-like"/>
</dbReference>
<dbReference type="InterPro" id="IPR022914">
    <property type="entry name" value="UPF0397"/>
</dbReference>
<dbReference type="NCBIfam" id="NF010182">
    <property type="entry name" value="PRK13661.1"/>
    <property type="match status" value="1"/>
</dbReference>
<dbReference type="PANTHER" id="PTHR37815">
    <property type="entry name" value="UPF0397 PROTEIN BC_2624-RELATED"/>
    <property type="match status" value="1"/>
</dbReference>
<dbReference type="PANTHER" id="PTHR37815:SF3">
    <property type="entry name" value="UPF0397 PROTEIN SPR0429"/>
    <property type="match status" value="1"/>
</dbReference>
<dbReference type="Pfam" id="PF07155">
    <property type="entry name" value="ECF-ribofla_trS"/>
    <property type="match status" value="1"/>
</dbReference>